<reference key="1">
    <citation type="journal article" date="2006" name="Proc. Natl. Acad. Sci. U.S.A.">
        <title>Comparative genomics of the lactic acid bacteria.</title>
        <authorList>
            <person name="Makarova K.S."/>
            <person name="Slesarev A."/>
            <person name="Wolf Y.I."/>
            <person name="Sorokin A."/>
            <person name="Mirkin B."/>
            <person name="Koonin E.V."/>
            <person name="Pavlov A."/>
            <person name="Pavlova N."/>
            <person name="Karamychev V."/>
            <person name="Polouchine N."/>
            <person name="Shakhova V."/>
            <person name="Grigoriev I."/>
            <person name="Lou Y."/>
            <person name="Rohksar D."/>
            <person name="Lucas S."/>
            <person name="Huang K."/>
            <person name="Goodstein D.M."/>
            <person name="Hawkins T."/>
            <person name="Plengvidhya V."/>
            <person name="Welker D."/>
            <person name="Hughes J."/>
            <person name="Goh Y."/>
            <person name="Benson A."/>
            <person name="Baldwin K."/>
            <person name="Lee J.-H."/>
            <person name="Diaz-Muniz I."/>
            <person name="Dosti B."/>
            <person name="Smeianov V."/>
            <person name="Wechter W."/>
            <person name="Barabote R."/>
            <person name="Lorca G."/>
            <person name="Altermann E."/>
            <person name="Barrangou R."/>
            <person name="Ganesan B."/>
            <person name="Xie Y."/>
            <person name="Rawsthorne H."/>
            <person name="Tamir D."/>
            <person name="Parker C."/>
            <person name="Breidt F."/>
            <person name="Broadbent J.R."/>
            <person name="Hutkins R."/>
            <person name="O'Sullivan D."/>
            <person name="Steele J."/>
            <person name="Unlu G."/>
            <person name="Saier M.H. Jr."/>
            <person name="Klaenhammer T."/>
            <person name="Richardson P."/>
            <person name="Kozyavkin S."/>
            <person name="Weimer B.C."/>
            <person name="Mills D.A."/>
        </authorList>
    </citation>
    <scope>NUCLEOTIDE SEQUENCE [LARGE SCALE GENOMIC DNA]</scope>
    <source>
        <strain>SK11</strain>
    </source>
</reference>
<feature type="chain" id="PRO_1000017883" description="Uridine kinase">
    <location>
        <begin position="1"/>
        <end position="206"/>
    </location>
</feature>
<feature type="binding site" evidence="1">
    <location>
        <begin position="11"/>
        <end position="18"/>
    </location>
    <ligand>
        <name>ATP</name>
        <dbReference type="ChEBI" id="CHEBI:30616"/>
    </ligand>
</feature>
<accession>Q02XK6</accession>
<evidence type="ECO:0000255" key="1">
    <source>
        <dbReference type="HAMAP-Rule" id="MF_00551"/>
    </source>
</evidence>
<dbReference type="EC" id="2.7.1.48" evidence="1"/>
<dbReference type="EMBL" id="CP000425">
    <property type="protein sequence ID" value="ABJ73316.1"/>
    <property type="molecule type" value="Genomic_DNA"/>
</dbReference>
<dbReference type="RefSeq" id="WP_011676564.1">
    <property type="nucleotide sequence ID" value="NC_008527.1"/>
</dbReference>
<dbReference type="SMR" id="Q02XK6"/>
<dbReference type="GeneID" id="61109910"/>
<dbReference type="KEGG" id="llc:LACR_1825"/>
<dbReference type="HOGENOM" id="CLU_021278_1_2_9"/>
<dbReference type="UniPathway" id="UPA00574">
    <property type="reaction ID" value="UER00637"/>
</dbReference>
<dbReference type="UniPathway" id="UPA00579">
    <property type="reaction ID" value="UER00640"/>
</dbReference>
<dbReference type="Proteomes" id="UP000000240">
    <property type="component" value="Chromosome"/>
</dbReference>
<dbReference type="GO" id="GO:0005737">
    <property type="term" value="C:cytoplasm"/>
    <property type="evidence" value="ECO:0007669"/>
    <property type="project" value="UniProtKB-SubCell"/>
</dbReference>
<dbReference type="GO" id="GO:0005524">
    <property type="term" value="F:ATP binding"/>
    <property type="evidence" value="ECO:0007669"/>
    <property type="project" value="UniProtKB-UniRule"/>
</dbReference>
<dbReference type="GO" id="GO:0043771">
    <property type="term" value="F:cytidine kinase activity"/>
    <property type="evidence" value="ECO:0007669"/>
    <property type="project" value="RHEA"/>
</dbReference>
<dbReference type="GO" id="GO:0004849">
    <property type="term" value="F:uridine kinase activity"/>
    <property type="evidence" value="ECO:0007669"/>
    <property type="project" value="UniProtKB-UniRule"/>
</dbReference>
<dbReference type="GO" id="GO:0044211">
    <property type="term" value="P:CTP salvage"/>
    <property type="evidence" value="ECO:0007669"/>
    <property type="project" value="UniProtKB-UniRule"/>
</dbReference>
<dbReference type="GO" id="GO:0044206">
    <property type="term" value="P:UMP salvage"/>
    <property type="evidence" value="ECO:0007669"/>
    <property type="project" value="UniProtKB-UniRule"/>
</dbReference>
<dbReference type="CDD" id="cd02023">
    <property type="entry name" value="UMPK"/>
    <property type="match status" value="1"/>
</dbReference>
<dbReference type="Gene3D" id="3.40.50.300">
    <property type="entry name" value="P-loop containing nucleotide triphosphate hydrolases"/>
    <property type="match status" value="1"/>
</dbReference>
<dbReference type="HAMAP" id="MF_00551">
    <property type="entry name" value="Uridine_kinase"/>
    <property type="match status" value="1"/>
</dbReference>
<dbReference type="InterPro" id="IPR027417">
    <property type="entry name" value="P-loop_NTPase"/>
</dbReference>
<dbReference type="InterPro" id="IPR006083">
    <property type="entry name" value="PRK/URK"/>
</dbReference>
<dbReference type="InterPro" id="IPR026008">
    <property type="entry name" value="Uridine_kinase"/>
</dbReference>
<dbReference type="InterPro" id="IPR000764">
    <property type="entry name" value="Uridine_kinase-like"/>
</dbReference>
<dbReference type="NCBIfam" id="NF004018">
    <property type="entry name" value="PRK05480.1"/>
    <property type="match status" value="1"/>
</dbReference>
<dbReference type="NCBIfam" id="TIGR00235">
    <property type="entry name" value="udk"/>
    <property type="match status" value="1"/>
</dbReference>
<dbReference type="PANTHER" id="PTHR10285">
    <property type="entry name" value="URIDINE KINASE"/>
    <property type="match status" value="1"/>
</dbReference>
<dbReference type="Pfam" id="PF00485">
    <property type="entry name" value="PRK"/>
    <property type="match status" value="1"/>
</dbReference>
<dbReference type="PRINTS" id="PR00988">
    <property type="entry name" value="URIDINKINASE"/>
</dbReference>
<dbReference type="SUPFAM" id="SSF52540">
    <property type="entry name" value="P-loop containing nucleoside triphosphate hydrolases"/>
    <property type="match status" value="1"/>
</dbReference>
<keyword id="KW-0067">ATP-binding</keyword>
<keyword id="KW-0963">Cytoplasm</keyword>
<keyword id="KW-0418">Kinase</keyword>
<keyword id="KW-0547">Nucleotide-binding</keyword>
<keyword id="KW-0808">Transferase</keyword>
<organism>
    <name type="scientific">Lactococcus lactis subsp. cremoris (strain SK11)</name>
    <dbReference type="NCBI Taxonomy" id="272622"/>
    <lineage>
        <taxon>Bacteria</taxon>
        <taxon>Bacillati</taxon>
        <taxon>Bacillota</taxon>
        <taxon>Bacilli</taxon>
        <taxon>Lactobacillales</taxon>
        <taxon>Streptococcaceae</taxon>
        <taxon>Lactococcus</taxon>
        <taxon>Lactococcus cremoris subsp. cremoris</taxon>
    </lineage>
</organism>
<name>URK_LACLS</name>
<protein>
    <recommendedName>
        <fullName evidence="1">Uridine kinase</fullName>
        <ecNumber evidence="1">2.7.1.48</ecNumber>
    </recommendedName>
    <alternativeName>
        <fullName evidence="1">Cytidine monophosphokinase</fullName>
    </alternativeName>
    <alternativeName>
        <fullName evidence="1">Uridine monophosphokinase</fullName>
    </alternativeName>
</protein>
<comment type="catalytic activity">
    <reaction evidence="1">
        <text>uridine + ATP = UMP + ADP + H(+)</text>
        <dbReference type="Rhea" id="RHEA:16825"/>
        <dbReference type="ChEBI" id="CHEBI:15378"/>
        <dbReference type="ChEBI" id="CHEBI:16704"/>
        <dbReference type="ChEBI" id="CHEBI:30616"/>
        <dbReference type="ChEBI" id="CHEBI:57865"/>
        <dbReference type="ChEBI" id="CHEBI:456216"/>
        <dbReference type="EC" id="2.7.1.48"/>
    </reaction>
</comment>
<comment type="catalytic activity">
    <reaction evidence="1">
        <text>cytidine + ATP = CMP + ADP + H(+)</text>
        <dbReference type="Rhea" id="RHEA:24674"/>
        <dbReference type="ChEBI" id="CHEBI:15378"/>
        <dbReference type="ChEBI" id="CHEBI:17562"/>
        <dbReference type="ChEBI" id="CHEBI:30616"/>
        <dbReference type="ChEBI" id="CHEBI:60377"/>
        <dbReference type="ChEBI" id="CHEBI:456216"/>
        <dbReference type="EC" id="2.7.1.48"/>
    </reaction>
</comment>
<comment type="pathway">
    <text evidence="1">Pyrimidine metabolism; CTP biosynthesis via salvage pathway; CTP from cytidine: step 1/3.</text>
</comment>
<comment type="pathway">
    <text evidence="1">Pyrimidine metabolism; UMP biosynthesis via salvage pathway; UMP from uridine: step 1/1.</text>
</comment>
<comment type="subcellular location">
    <subcellularLocation>
        <location evidence="1">Cytoplasm</location>
    </subcellularLocation>
</comment>
<comment type="similarity">
    <text evidence="1">Belongs to the uridine kinase family.</text>
</comment>
<sequence length="206" mass="23754">MKKTLIIGVTGGSASGKTSVSHAILETFSNERIAMIEHDSYYKDQSHLTFEERTKTNYDHPLAFDTDYLIAQLKELQYGRAVDIPIYDYAKHTRSQETYRQEPVDVLIVEGILVLEDERLRDLMDIKIFVDTDDDVRIIRRIRRDIEERGRTLDSVITQYLEAVKPMYHQFIEPTKRYADVIIPEGVSNTVGVDIITTKIASILND</sequence>
<proteinExistence type="inferred from homology"/>
<gene>
    <name evidence="1" type="primary">udk</name>
    <name type="ordered locus">LACR_1825</name>
</gene>